<proteinExistence type="evidence at transcript level"/>
<protein>
    <recommendedName>
        <fullName>SWI/SNF-related matrix-associated actin-dependent regulator of chromatin subfamily B member 1-A</fullName>
    </recommendedName>
</protein>
<organism>
    <name type="scientific">Danio rerio</name>
    <name type="common">Zebrafish</name>
    <name type="synonym">Brachydanio rerio</name>
    <dbReference type="NCBI Taxonomy" id="7955"/>
    <lineage>
        <taxon>Eukaryota</taxon>
        <taxon>Metazoa</taxon>
        <taxon>Chordata</taxon>
        <taxon>Craniata</taxon>
        <taxon>Vertebrata</taxon>
        <taxon>Euteleostomi</taxon>
        <taxon>Actinopterygii</taxon>
        <taxon>Neopterygii</taxon>
        <taxon>Teleostei</taxon>
        <taxon>Ostariophysi</taxon>
        <taxon>Cypriniformes</taxon>
        <taxon>Danionidae</taxon>
        <taxon>Danioninae</taxon>
        <taxon>Danio</taxon>
    </lineage>
</organism>
<dbReference type="EMBL" id="BC085668">
    <property type="protein sequence ID" value="AAH85668.1"/>
    <property type="molecule type" value="mRNA"/>
</dbReference>
<dbReference type="RefSeq" id="NP_001007297.1">
    <property type="nucleotide sequence ID" value="NM_001007296.1"/>
</dbReference>
<dbReference type="SMR" id="Q5U379"/>
<dbReference type="FunCoup" id="Q5U379">
    <property type="interactions" value="1179"/>
</dbReference>
<dbReference type="STRING" id="7955.ENSDARP00000049943"/>
<dbReference type="PaxDb" id="7955-ENSDARP00000049943"/>
<dbReference type="Ensembl" id="ENSDART00000011318">
    <property type="protein sequence ID" value="ENSDARP00000004210"/>
    <property type="gene ID" value="ENSDARG00000111561"/>
</dbReference>
<dbReference type="Ensembl" id="ENSDART00000049944">
    <property type="protein sequence ID" value="ENSDARP00000049943"/>
    <property type="gene ID" value="ENSDARG00000033647"/>
</dbReference>
<dbReference type="GeneID" id="799716"/>
<dbReference type="KEGG" id="dre:799716"/>
<dbReference type="AGR" id="ZFIN:ZDB-GENE-041114-5"/>
<dbReference type="CTD" id="799716"/>
<dbReference type="ZFIN" id="ZDB-GENE-041114-5">
    <property type="gene designation" value="smarcb1a"/>
</dbReference>
<dbReference type="eggNOG" id="KOG1649">
    <property type="taxonomic scope" value="Eukaryota"/>
</dbReference>
<dbReference type="HOGENOM" id="CLU_035084_0_0_1"/>
<dbReference type="InParanoid" id="Q5U379"/>
<dbReference type="OMA" id="AFXRMRR"/>
<dbReference type="OrthoDB" id="515064at2759"/>
<dbReference type="PhylomeDB" id="Q5U379"/>
<dbReference type="TreeFam" id="TF105993"/>
<dbReference type="PRO" id="PR:Q5U379"/>
<dbReference type="Proteomes" id="UP000000437">
    <property type="component" value="Alternate scaffold 8"/>
</dbReference>
<dbReference type="Proteomes" id="UP000000437">
    <property type="component" value="Chromosome 8"/>
</dbReference>
<dbReference type="Bgee" id="ENSDARG00000033647">
    <property type="expression patterns" value="Expressed in mature ovarian follicle and 27 other cell types or tissues"/>
</dbReference>
<dbReference type="ExpressionAtlas" id="Q5U379">
    <property type="expression patterns" value="baseline"/>
</dbReference>
<dbReference type="GO" id="GO:0035060">
    <property type="term" value="C:brahma complex"/>
    <property type="evidence" value="ECO:0000318"/>
    <property type="project" value="GO_Central"/>
</dbReference>
<dbReference type="GO" id="GO:0071565">
    <property type="term" value="C:nBAF complex"/>
    <property type="evidence" value="ECO:0000318"/>
    <property type="project" value="GO_Central"/>
</dbReference>
<dbReference type="GO" id="GO:0071564">
    <property type="term" value="C:npBAF complex"/>
    <property type="evidence" value="ECO:0000318"/>
    <property type="project" value="GO_Central"/>
</dbReference>
<dbReference type="GO" id="GO:0000228">
    <property type="term" value="C:nuclear chromosome"/>
    <property type="evidence" value="ECO:0007669"/>
    <property type="project" value="InterPro"/>
</dbReference>
<dbReference type="GO" id="GO:0005634">
    <property type="term" value="C:nucleus"/>
    <property type="evidence" value="ECO:0000318"/>
    <property type="project" value="GO_Central"/>
</dbReference>
<dbReference type="GO" id="GO:0003677">
    <property type="term" value="F:DNA binding"/>
    <property type="evidence" value="ECO:0000250"/>
    <property type="project" value="UniProtKB"/>
</dbReference>
<dbReference type="GO" id="GO:0003713">
    <property type="term" value="F:transcription coactivator activity"/>
    <property type="evidence" value="ECO:0000318"/>
    <property type="project" value="GO_Central"/>
</dbReference>
<dbReference type="GO" id="GO:0006338">
    <property type="term" value="P:chromatin remodeling"/>
    <property type="evidence" value="ECO:0000318"/>
    <property type="project" value="GO_Central"/>
</dbReference>
<dbReference type="GO" id="GO:0006357">
    <property type="term" value="P:regulation of transcription by RNA polymerase II"/>
    <property type="evidence" value="ECO:0000318"/>
    <property type="project" value="GO_Central"/>
</dbReference>
<dbReference type="CDD" id="cd21086">
    <property type="entry name" value="WH_NTD_SMARCB1"/>
    <property type="match status" value="1"/>
</dbReference>
<dbReference type="InterPro" id="IPR048664">
    <property type="entry name" value="INI1_DNA-bd"/>
</dbReference>
<dbReference type="InterPro" id="IPR017393">
    <property type="entry name" value="Sfh1/SNF5"/>
</dbReference>
<dbReference type="InterPro" id="IPR006939">
    <property type="entry name" value="SNF5"/>
</dbReference>
<dbReference type="PANTHER" id="PTHR10019">
    <property type="entry name" value="SNF5"/>
    <property type="match status" value="1"/>
</dbReference>
<dbReference type="Pfam" id="PF21459">
    <property type="entry name" value="INI1_DNA-bd"/>
    <property type="match status" value="1"/>
</dbReference>
<dbReference type="Pfam" id="PF04855">
    <property type="entry name" value="SNF5"/>
    <property type="match status" value="1"/>
</dbReference>
<dbReference type="PIRSF" id="PIRSF038126">
    <property type="entry name" value="SWI_SNF"/>
    <property type="match status" value="1"/>
</dbReference>
<name>SNF5_DANRE</name>
<gene>
    <name type="primary">smarcb1a</name>
    <name type="synonym">smarcb1</name>
    <name type="ORF">zgc:92517</name>
</gene>
<sequence>MALSKTYGQKPIKFQLEEDGDFYMIGSEVGNYLRMFRGSLYKRYPSLSRRLATVEERKKIVASSHDHGYTTLATSVTLLKASEVEEIFDGHDEKYKAVSISTEPPAYLREQKAKRNSQWVPTLPNSSHHLDAVPCSTTINRNRMGRDKKRTFPLCFDDHDPAVIHENASQQEVLVPIRLDMEIDGQKLRDAFTWNMNEKLMTPEMFAEILCDDLDLSPLTFVPAIASAIRQQIESYPTDSILDEQMDQRVIIKLNIHVGNISLVDQFEWDMSEKENSPEKFALKLCSELGLGGEFVTTIAYSIRGQLSWHQRTYAFSENPLPTVEIAIRNTGDADQWCPLLETLTDAEMEKKIRDQDRNTRRMRRLANTAPAW</sequence>
<keyword id="KW-0010">Activator</keyword>
<keyword id="KW-0238">DNA-binding</keyword>
<keyword id="KW-0539">Nucleus</keyword>
<keyword id="KW-1185">Reference proteome</keyword>
<keyword id="KW-0804">Transcription</keyword>
<keyword id="KW-0805">Transcription regulation</keyword>
<feature type="chain" id="PRO_0000205953" description="SWI/SNF-related matrix-associated actin-dependent regulator of chromatin subfamily B member 1-A">
    <location>
        <begin position="1"/>
        <end position="373"/>
    </location>
</feature>
<feature type="region of interest" description="DNA-binding" evidence="2">
    <location>
        <begin position="1"/>
        <end position="101"/>
    </location>
</feature>
<evidence type="ECO:0000250" key="1"/>
<evidence type="ECO:0000250" key="2">
    <source>
        <dbReference type="UniProtKB" id="Q12824"/>
    </source>
</evidence>
<evidence type="ECO:0000250" key="3">
    <source>
        <dbReference type="UniProtKB" id="Q9Z0H3"/>
    </source>
</evidence>
<evidence type="ECO:0000305" key="4"/>
<comment type="function">
    <text evidence="2">Involved in chromatin-remodeling. Core component of the BAF (SWI/SNF) complex. This ATP-dependent chromatin-remodeling complex plays important roles in cell proliferation and differentiation, in cellular antiviral activities and inhibition of tumor formation. Belongs to the neural progenitors-specific chromatin remodeling complex (npBAF complex) and the neuron-specific chromatin remodeling complex (nBAF complex) and may play a role in neural development (By similarity).</text>
</comment>
<comment type="subunit">
    <text evidence="2 3">Component of the multiprotein chromatin-remodeling complexes SWI/SNF. Component of neural progenitors-specific chromatin remodeling complex (npBAF complex) and the neuron-specific chromatin remodeling complex (nBAF complex) (By similarity). Component of the BAF (SWI/SNF) chromatin remodeling complex. Component of the SWI/SNF-B (PBAF) chromatin remodeling complex. Binds to double-stranded DNA (By similarity).</text>
</comment>
<comment type="subcellular location">
    <subcellularLocation>
        <location evidence="1">Nucleus</location>
    </subcellularLocation>
</comment>
<comment type="domain">
    <text evidence="2">The N-terminal DNA-binding region is structurally similar to winged helix domains.</text>
</comment>
<comment type="similarity">
    <text evidence="4">Belongs to the SNF5 family.</text>
</comment>
<reference key="1">
    <citation type="submission" date="2004-11" db="EMBL/GenBank/DDBJ databases">
        <authorList>
            <consortium name="NIH - Zebrafish Gene Collection (ZGC) project"/>
        </authorList>
    </citation>
    <scope>NUCLEOTIDE SEQUENCE [LARGE SCALE MRNA]</scope>
</reference>
<accession>Q5U379</accession>